<protein>
    <recommendedName>
        <fullName>DnaJ homolog subfamily C member 27</fullName>
    </recommendedName>
    <alternativeName>
        <fullName>Rab and DnaJ domain-containing protein</fullName>
    </alternativeName>
</protein>
<comment type="function">
    <text evidence="2">GTPase possibly involved in regulation of the MEK/ERK pathway.</text>
</comment>
<comment type="subcellular location">
    <subcellularLocation>
        <location evidence="2">Nucleus</location>
    </subcellularLocation>
</comment>
<comment type="similarity">
    <text evidence="4">Belongs to the small GTPase superfamily. Rab family.</text>
</comment>
<reference key="1">
    <citation type="journal article" date="2006" name="BMC Genomics">
        <title>Gene expression profiling of chicken primordial germ cell ESTs.</title>
        <authorList>
            <person name="Han J.Y."/>
            <person name="Park T.S."/>
            <person name="Kim J.N."/>
            <person name="Kim M.A."/>
            <person name="Lim D."/>
            <person name="Lim J.M."/>
            <person name="Kim H."/>
        </authorList>
    </citation>
    <scope>NUCLEOTIDE SEQUENCE [LARGE SCALE MRNA]</scope>
    <source>
        <strain>White leghorn</strain>
        <tissue>Embryonic gonad</tissue>
    </source>
</reference>
<reference key="2">
    <citation type="journal article" date="2004" name="Gene">
        <title>RJLs: a new family of Ras-related GTP-binding proteins.</title>
        <authorList>
            <person name="Nepomuceno-Silva J.L."/>
            <person name="de Melo L.D."/>
            <person name="Mendonca S.M."/>
            <person name="Paixao J.C."/>
            <person name="Lopes U.G."/>
        </authorList>
    </citation>
    <scope>IDENTIFICATION</scope>
</reference>
<gene>
    <name type="primary">DNAJC27</name>
    <name type="synonym">RBJ</name>
</gene>
<evidence type="ECO:0000250" key="1"/>
<evidence type="ECO:0000250" key="2">
    <source>
        <dbReference type="UniProtKB" id="Q8CFP6"/>
    </source>
</evidence>
<evidence type="ECO:0000255" key="3">
    <source>
        <dbReference type="PROSITE-ProRule" id="PRU00286"/>
    </source>
</evidence>
<evidence type="ECO:0000305" key="4"/>
<organism>
    <name type="scientific">Gallus gallus</name>
    <name type="common">Chicken</name>
    <dbReference type="NCBI Taxonomy" id="9031"/>
    <lineage>
        <taxon>Eukaryota</taxon>
        <taxon>Metazoa</taxon>
        <taxon>Chordata</taxon>
        <taxon>Craniata</taxon>
        <taxon>Vertebrata</taxon>
        <taxon>Euteleostomi</taxon>
        <taxon>Archelosauria</taxon>
        <taxon>Archosauria</taxon>
        <taxon>Dinosauria</taxon>
        <taxon>Saurischia</taxon>
        <taxon>Theropoda</taxon>
        <taxon>Coelurosauria</taxon>
        <taxon>Aves</taxon>
        <taxon>Neognathae</taxon>
        <taxon>Galloanserae</taxon>
        <taxon>Galliformes</taxon>
        <taxon>Phasianidae</taxon>
        <taxon>Phasianinae</taxon>
        <taxon>Gallus</taxon>
    </lineage>
</organism>
<keyword id="KW-0342">GTP-binding</keyword>
<keyword id="KW-0547">Nucleotide-binding</keyword>
<keyword id="KW-0539">Nucleus</keyword>
<keyword id="KW-1185">Reference proteome</keyword>
<feature type="chain" id="PRO_0000332979" description="DnaJ homolog subfamily C member 27">
    <location>
        <begin position="1"/>
        <end position="273"/>
    </location>
</feature>
<feature type="domain" description="J" evidence="3">
    <location>
        <begin position="217"/>
        <end position="273"/>
    </location>
</feature>
<feature type="binding site" evidence="1">
    <location>
        <begin position="23"/>
        <end position="30"/>
    </location>
    <ligand>
        <name>GTP</name>
        <dbReference type="ChEBI" id="CHEBI:37565"/>
    </ligand>
</feature>
<feature type="binding site" evidence="1">
    <location>
        <begin position="71"/>
        <end position="75"/>
    </location>
    <ligand>
        <name>GTP</name>
        <dbReference type="ChEBI" id="CHEBI:37565"/>
    </ligand>
</feature>
<feature type="binding site" evidence="1">
    <location>
        <begin position="134"/>
        <end position="137"/>
    </location>
    <ligand>
        <name>GTP</name>
        <dbReference type="ChEBI" id="CHEBI:37565"/>
    </ligand>
</feature>
<sequence length="273" mass="30778">MEANAPKRKEARKSLRIKVISMGNAEVGKSCIIKRYCEKRFVPKYLATIGIDYGVTKVQVRDREIKVNIFDMAGHPFFYEVRNEFYKDTQGVILVYDVGQKESFDALDAWLAEMKQELGPHGNMDNIVFVVCANKIDCTKHRSVDESEGRLWAESRGFLYFETSAQTGEGINEMFQTFYSAIIDLCDNGGKRPPSSMGVGFTKEQADAIRRIRNSKDSWDMLGVKPGATRDEVNKAYRKLAVLLHPDKCVAPGSEDAFKAVVNARTALLKNIK</sequence>
<accession>Q6IMM1</accession>
<dbReference type="EMBL" id="DR414424">
    <property type="status" value="NOT_ANNOTATED_CDS"/>
    <property type="molecule type" value="mRNA"/>
</dbReference>
<dbReference type="EMBL" id="BK001282">
    <property type="protein sequence ID" value="DAA01321.1"/>
    <property type="molecule type" value="mRNA"/>
</dbReference>
<dbReference type="RefSeq" id="NP_998723.1">
    <property type="nucleotide sequence ID" value="NM_213558.2"/>
</dbReference>
<dbReference type="SMR" id="Q6IMM1"/>
<dbReference type="FunCoup" id="Q6IMM1">
    <property type="interactions" value="376"/>
</dbReference>
<dbReference type="STRING" id="9031.ENSGALP00000041528"/>
<dbReference type="PaxDb" id="9031-ENSGALP00000041528"/>
<dbReference type="Ensembl" id="ENSGALT00010025508.1">
    <property type="protein sequence ID" value="ENSGALP00010014405.1"/>
    <property type="gene ID" value="ENSGALG00010010699.1"/>
</dbReference>
<dbReference type="GeneID" id="402783"/>
<dbReference type="KEGG" id="gga:402783"/>
<dbReference type="CTD" id="51277"/>
<dbReference type="VEuPathDB" id="HostDB:geneid_402783"/>
<dbReference type="eggNOG" id="KOG0098">
    <property type="taxonomic scope" value="Eukaryota"/>
</dbReference>
<dbReference type="GeneTree" id="ENSGT00940000157133"/>
<dbReference type="HOGENOM" id="CLU_041217_16_0_1"/>
<dbReference type="InParanoid" id="Q6IMM1"/>
<dbReference type="OMA" id="NMENVVF"/>
<dbReference type="OrthoDB" id="8830751at2759"/>
<dbReference type="PhylomeDB" id="Q6IMM1"/>
<dbReference type="TreeFam" id="TF328564"/>
<dbReference type="PRO" id="PR:Q6IMM1"/>
<dbReference type="Proteomes" id="UP000000539">
    <property type="component" value="Chromosome 3"/>
</dbReference>
<dbReference type="Bgee" id="ENSGALG00000028967">
    <property type="expression patterns" value="Expressed in brain and 13 other cell types or tissues"/>
</dbReference>
<dbReference type="GO" id="GO:0005634">
    <property type="term" value="C:nucleus"/>
    <property type="evidence" value="ECO:0007669"/>
    <property type="project" value="UniProtKB-SubCell"/>
</dbReference>
<dbReference type="GO" id="GO:0005525">
    <property type="term" value="F:GTP binding"/>
    <property type="evidence" value="ECO:0007669"/>
    <property type="project" value="UniProtKB-KW"/>
</dbReference>
<dbReference type="GO" id="GO:0003924">
    <property type="term" value="F:GTPase activity"/>
    <property type="evidence" value="ECO:0000318"/>
    <property type="project" value="GO_Central"/>
</dbReference>
<dbReference type="GO" id="GO:0006886">
    <property type="term" value="P:intracellular protein transport"/>
    <property type="evidence" value="ECO:0000318"/>
    <property type="project" value="GO_Central"/>
</dbReference>
<dbReference type="GO" id="GO:0070374">
    <property type="term" value="P:positive regulation of ERK1 and ERK2 cascade"/>
    <property type="evidence" value="ECO:0007669"/>
    <property type="project" value="Ensembl"/>
</dbReference>
<dbReference type="CDD" id="cd06257">
    <property type="entry name" value="DnaJ"/>
    <property type="match status" value="1"/>
</dbReference>
<dbReference type="CDD" id="cd04119">
    <property type="entry name" value="RJL"/>
    <property type="match status" value="1"/>
</dbReference>
<dbReference type="FunFam" id="3.40.50.300:FF:000697">
    <property type="entry name" value="DnaJ homolog subfamily C member 27"/>
    <property type="match status" value="1"/>
</dbReference>
<dbReference type="FunFam" id="1.10.287.110:FF:000019">
    <property type="entry name" value="dnaJ homolog subfamily C member 27"/>
    <property type="match status" value="1"/>
</dbReference>
<dbReference type="Gene3D" id="1.10.287.110">
    <property type="entry name" value="DnaJ domain"/>
    <property type="match status" value="1"/>
</dbReference>
<dbReference type="Gene3D" id="3.40.50.300">
    <property type="entry name" value="P-loop containing nucleotide triphosphate hydrolases"/>
    <property type="match status" value="1"/>
</dbReference>
<dbReference type="InterPro" id="IPR001623">
    <property type="entry name" value="DnaJ_domain"/>
</dbReference>
<dbReference type="InterPro" id="IPR036869">
    <property type="entry name" value="J_dom_sf"/>
</dbReference>
<dbReference type="InterPro" id="IPR027417">
    <property type="entry name" value="P-loop_NTPase"/>
</dbReference>
<dbReference type="InterPro" id="IPR050227">
    <property type="entry name" value="Rab"/>
</dbReference>
<dbReference type="InterPro" id="IPR005225">
    <property type="entry name" value="Small_GTP-bd"/>
</dbReference>
<dbReference type="InterPro" id="IPR001806">
    <property type="entry name" value="Small_GTPase"/>
</dbReference>
<dbReference type="NCBIfam" id="TIGR00231">
    <property type="entry name" value="small_GTP"/>
    <property type="match status" value="1"/>
</dbReference>
<dbReference type="PANTHER" id="PTHR47977">
    <property type="entry name" value="RAS-RELATED PROTEIN RAB"/>
    <property type="match status" value="1"/>
</dbReference>
<dbReference type="Pfam" id="PF00226">
    <property type="entry name" value="DnaJ"/>
    <property type="match status" value="1"/>
</dbReference>
<dbReference type="Pfam" id="PF00071">
    <property type="entry name" value="Ras"/>
    <property type="match status" value="1"/>
</dbReference>
<dbReference type="PRINTS" id="PR00625">
    <property type="entry name" value="JDOMAIN"/>
</dbReference>
<dbReference type="PRINTS" id="PR00449">
    <property type="entry name" value="RASTRNSFRMNG"/>
</dbReference>
<dbReference type="SMART" id="SM00271">
    <property type="entry name" value="DnaJ"/>
    <property type="match status" value="1"/>
</dbReference>
<dbReference type="SMART" id="SM00175">
    <property type="entry name" value="RAB"/>
    <property type="match status" value="1"/>
</dbReference>
<dbReference type="SMART" id="SM00176">
    <property type="entry name" value="RAN"/>
    <property type="match status" value="1"/>
</dbReference>
<dbReference type="SMART" id="SM00173">
    <property type="entry name" value="RAS"/>
    <property type="match status" value="1"/>
</dbReference>
<dbReference type="SMART" id="SM00174">
    <property type="entry name" value="RHO"/>
    <property type="match status" value="1"/>
</dbReference>
<dbReference type="SUPFAM" id="SSF46565">
    <property type="entry name" value="Chaperone J-domain"/>
    <property type="match status" value="1"/>
</dbReference>
<dbReference type="SUPFAM" id="SSF52540">
    <property type="entry name" value="P-loop containing nucleoside triphosphate hydrolases"/>
    <property type="match status" value="1"/>
</dbReference>
<dbReference type="PROSITE" id="PS50076">
    <property type="entry name" value="DNAJ_2"/>
    <property type="match status" value="1"/>
</dbReference>
<dbReference type="PROSITE" id="PS51419">
    <property type="entry name" value="RAB"/>
    <property type="match status" value="1"/>
</dbReference>
<proteinExistence type="evidence at transcript level"/>
<name>DJC27_CHICK</name>